<proteinExistence type="evidence at protein level"/>
<sequence length="302" mass="32905">MVTEQEIEAIGKTLVDPKQPLQARFRALFTLRGLGGPDAISWISRGFEDSSALLKHELAYCLGQMRDARAIPVLADVLQDTSQEPMVRHEAGEALGAIGNPEVLGLLKQYSTDPVVEVAETCQLAVGRLEWLQQHPGEATCAGPYLSVDPAPPAAEQDVGRLREALLDEARPLFERYRAMFALRNVGGKEAALALAEGLQCGSALFRHEVGYVLGQLQHEAAVPGLAATLARTTESPMVRHECAEALGAIARPACLAALREHIEDPEQVVRESCEVALDMYEYESSQDFQYADGLERLRPPP</sequence>
<evidence type="ECO:0000250" key="1">
    <source>
        <dbReference type="UniProtKB" id="Q9BU89"/>
    </source>
</evidence>
<evidence type="ECO:0000255" key="2">
    <source>
        <dbReference type="HAMAP-Rule" id="MF_03101"/>
    </source>
</evidence>
<evidence type="ECO:0000269" key="3">
    <source>
    </source>
</evidence>
<evidence type="ECO:0000303" key="4">
    <source>
    </source>
</evidence>
<evidence type="ECO:0000305" key="5"/>
<evidence type="ECO:0000312" key="6">
    <source>
        <dbReference type="MGI" id="MGI:1915964"/>
    </source>
</evidence>
<reference key="1">
    <citation type="journal article" date="2005" name="Science">
        <title>The transcriptional landscape of the mammalian genome.</title>
        <authorList>
            <person name="Carninci P."/>
            <person name="Kasukawa T."/>
            <person name="Katayama S."/>
            <person name="Gough J."/>
            <person name="Frith M.C."/>
            <person name="Maeda N."/>
            <person name="Oyama R."/>
            <person name="Ravasi T."/>
            <person name="Lenhard B."/>
            <person name="Wells C."/>
            <person name="Kodzius R."/>
            <person name="Shimokawa K."/>
            <person name="Bajic V.B."/>
            <person name="Brenner S.E."/>
            <person name="Batalov S."/>
            <person name="Forrest A.R."/>
            <person name="Zavolan M."/>
            <person name="Davis M.J."/>
            <person name="Wilming L.G."/>
            <person name="Aidinis V."/>
            <person name="Allen J.E."/>
            <person name="Ambesi-Impiombato A."/>
            <person name="Apweiler R."/>
            <person name="Aturaliya R.N."/>
            <person name="Bailey T.L."/>
            <person name="Bansal M."/>
            <person name="Baxter L."/>
            <person name="Beisel K.W."/>
            <person name="Bersano T."/>
            <person name="Bono H."/>
            <person name="Chalk A.M."/>
            <person name="Chiu K.P."/>
            <person name="Choudhary V."/>
            <person name="Christoffels A."/>
            <person name="Clutterbuck D.R."/>
            <person name="Crowe M.L."/>
            <person name="Dalla E."/>
            <person name="Dalrymple B.P."/>
            <person name="de Bono B."/>
            <person name="Della Gatta G."/>
            <person name="di Bernardo D."/>
            <person name="Down T."/>
            <person name="Engstrom P."/>
            <person name="Fagiolini M."/>
            <person name="Faulkner G."/>
            <person name="Fletcher C.F."/>
            <person name="Fukushima T."/>
            <person name="Furuno M."/>
            <person name="Futaki S."/>
            <person name="Gariboldi M."/>
            <person name="Georgii-Hemming P."/>
            <person name="Gingeras T.R."/>
            <person name="Gojobori T."/>
            <person name="Green R.E."/>
            <person name="Gustincich S."/>
            <person name="Harbers M."/>
            <person name="Hayashi Y."/>
            <person name="Hensch T.K."/>
            <person name="Hirokawa N."/>
            <person name="Hill D."/>
            <person name="Huminiecki L."/>
            <person name="Iacono M."/>
            <person name="Ikeo K."/>
            <person name="Iwama A."/>
            <person name="Ishikawa T."/>
            <person name="Jakt M."/>
            <person name="Kanapin A."/>
            <person name="Katoh M."/>
            <person name="Kawasawa Y."/>
            <person name="Kelso J."/>
            <person name="Kitamura H."/>
            <person name="Kitano H."/>
            <person name="Kollias G."/>
            <person name="Krishnan S.P."/>
            <person name="Kruger A."/>
            <person name="Kummerfeld S.K."/>
            <person name="Kurochkin I.V."/>
            <person name="Lareau L.F."/>
            <person name="Lazarevic D."/>
            <person name="Lipovich L."/>
            <person name="Liu J."/>
            <person name="Liuni S."/>
            <person name="McWilliam S."/>
            <person name="Madan Babu M."/>
            <person name="Madera M."/>
            <person name="Marchionni L."/>
            <person name="Matsuda H."/>
            <person name="Matsuzawa S."/>
            <person name="Miki H."/>
            <person name="Mignone F."/>
            <person name="Miyake S."/>
            <person name="Morris K."/>
            <person name="Mottagui-Tabar S."/>
            <person name="Mulder N."/>
            <person name="Nakano N."/>
            <person name="Nakauchi H."/>
            <person name="Ng P."/>
            <person name="Nilsson R."/>
            <person name="Nishiguchi S."/>
            <person name="Nishikawa S."/>
            <person name="Nori F."/>
            <person name="Ohara O."/>
            <person name="Okazaki Y."/>
            <person name="Orlando V."/>
            <person name="Pang K.C."/>
            <person name="Pavan W.J."/>
            <person name="Pavesi G."/>
            <person name="Pesole G."/>
            <person name="Petrovsky N."/>
            <person name="Piazza S."/>
            <person name="Reed J."/>
            <person name="Reid J.F."/>
            <person name="Ring B.Z."/>
            <person name="Ringwald M."/>
            <person name="Rost B."/>
            <person name="Ruan Y."/>
            <person name="Salzberg S.L."/>
            <person name="Sandelin A."/>
            <person name="Schneider C."/>
            <person name="Schoenbach C."/>
            <person name="Sekiguchi K."/>
            <person name="Semple C.A."/>
            <person name="Seno S."/>
            <person name="Sessa L."/>
            <person name="Sheng Y."/>
            <person name="Shibata Y."/>
            <person name="Shimada H."/>
            <person name="Shimada K."/>
            <person name="Silva D."/>
            <person name="Sinclair B."/>
            <person name="Sperling S."/>
            <person name="Stupka E."/>
            <person name="Sugiura K."/>
            <person name="Sultana R."/>
            <person name="Takenaka Y."/>
            <person name="Taki K."/>
            <person name="Tammoja K."/>
            <person name="Tan S.L."/>
            <person name="Tang S."/>
            <person name="Taylor M.S."/>
            <person name="Tegner J."/>
            <person name="Teichmann S.A."/>
            <person name="Ueda H.R."/>
            <person name="van Nimwegen E."/>
            <person name="Verardo R."/>
            <person name="Wei C.L."/>
            <person name="Yagi K."/>
            <person name="Yamanishi H."/>
            <person name="Zabarovsky E."/>
            <person name="Zhu S."/>
            <person name="Zimmer A."/>
            <person name="Hide W."/>
            <person name="Bult C."/>
            <person name="Grimmond S.M."/>
            <person name="Teasdale R.D."/>
            <person name="Liu E.T."/>
            <person name="Brusic V."/>
            <person name="Quackenbush J."/>
            <person name="Wahlestedt C."/>
            <person name="Mattick J.S."/>
            <person name="Hume D.A."/>
            <person name="Kai C."/>
            <person name="Sasaki D."/>
            <person name="Tomaru Y."/>
            <person name="Fukuda S."/>
            <person name="Kanamori-Katayama M."/>
            <person name="Suzuki M."/>
            <person name="Aoki J."/>
            <person name="Arakawa T."/>
            <person name="Iida J."/>
            <person name="Imamura K."/>
            <person name="Itoh M."/>
            <person name="Kato T."/>
            <person name="Kawaji H."/>
            <person name="Kawagashira N."/>
            <person name="Kawashima T."/>
            <person name="Kojima M."/>
            <person name="Kondo S."/>
            <person name="Konno H."/>
            <person name="Nakano K."/>
            <person name="Ninomiya N."/>
            <person name="Nishio T."/>
            <person name="Okada M."/>
            <person name="Plessy C."/>
            <person name="Shibata K."/>
            <person name="Shiraki T."/>
            <person name="Suzuki S."/>
            <person name="Tagami M."/>
            <person name="Waki K."/>
            <person name="Watahiki A."/>
            <person name="Okamura-Oho Y."/>
            <person name="Suzuki H."/>
            <person name="Kawai J."/>
            <person name="Hayashizaki Y."/>
        </authorList>
    </citation>
    <scope>NUCLEOTIDE SEQUENCE [LARGE SCALE MRNA] (ISOFORM 2)</scope>
    <source>
        <strain>C57BL/6J</strain>
        <tissue>Brain cortex</tissue>
    </source>
</reference>
<reference key="2">
    <citation type="journal article" date="2004" name="Genome Res.">
        <title>The status, quality, and expansion of the NIH full-length cDNA project: the Mammalian Gene Collection (MGC).</title>
        <authorList>
            <consortium name="The MGC Project Team"/>
        </authorList>
    </citation>
    <scope>NUCLEOTIDE SEQUENCE [LARGE SCALE MRNA] (ISOFORM 1)</scope>
    <source>
        <strain>Czech II</strain>
        <tissue>Mammary tumor</tissue>
    </source>
</reference>
<reference key="3">
    <citation type="journal article" date="2010" name="Cell">
        <title>A tissue-specific atlas of mouse protein phosphorylation and expression.</title>
        <authorList>
            <person name="Huttlin E.L."/>
            <person name="Jedrychowski M.P."/>
            <person name="Elias J.E."/>
            <person name="Goswami T."/>
            <person name="Rad R."/>
            <person name="Beausoleil S.A."/>
            <person name="Villen J."/>
            <person name="Haas W."/>
            <person name="Sowa M.E."/>
            <person name="Gygi S.P."/>
        </authorList>
    </citation>
    <scope>IDENTIFICATION BY MASS SPECTROMETRY [LARGE SCALE ANALYSIS]</scope>
    <source>
        <tissue>Heart</tissue>
        <tissue>Kidney</tissue>
        <tissue>Liver</tissue>
        <tissue>Lung</tissue>
        <tissue>Pancreas</tissue>
        <tissue>Spleen</tissue>
        <tissue>Testis</tissue>
    </source>
</reference>
<reference key="4">
    <citation type="journal article" date="2014" name="Dis. Model. Mech.">
        <title>A novel mouse model for inhibition of DOHH-mediated hypusine modification reveals a crucial function in embryonic development, proliferation and oncogenic transformation.</title>
        <authorList>
            <person name="Sievert H."/>
            <person name="Paellmann N."/>
            <person name="Miller K.K."/>
            <person name="Hermans-Borgmeyer I."/>
            <person name="Venz S."/>
            <person name="Sendoel A."/>
            <person name="Preukschas M."/>
            <person name="Schweizer M."/>
            <person name="Boettcher S."/>
            <person name="Janiesch P.C."/>
            <person name="Streichert T."/>
            <person name="Walther R."/>
            <person name="Hengartner M.O."/>
            <person name="Manz M.G."/>
            <person name="Bruemmendorf T.H."/>
            <person name="Bokemeyer C."/>
            <person name="Braig M."/>
            <person name="Hauber J."/>
            <person name="Duncan K.E."/>
            <person name="Balabanov S."/>
        </authorList>
    </citation>
    <scope>FUNCTION</scope>
    <scope>CATALYTIC ACTIVITY</scope>
    <scope>DISRUPTION PHENOTYPE</scope>
    <scope>PATHWAY</scope>
</reference>
<comment type="function">
    <text evidence="2 3">Catalyzes the hydroxylation of the N(6)-(4-aminobutyl)-L-lysine intermediate produced by deoxyhypusine synthase/DHPS on a critical lysine of the eukaryotic translation initiation factor 5A/eIF-5A. This is the second step of the post-translational modification of that lysine into an unusual amino acid residue named hypusine. Hypusination is unique to mature eIF-5A factor and is essential for its function.</text>
</comment>
<comment type="catalytic activity">
    <reaction evidence="2 3">
        <text>[eIF5A protein]-deoxyhypusine + AH2 + O2 = [eIF5A protein]-hypusine + A + H2O</text>
        <dbReference type="Rhea" id="RHEA:14101"/>
        <dbReference type="Rhea" id="RHEA-COMP:10144"/>
        <dbReference type="Rhea" id="RHEA-COMP:12592"/>
        <dbReference type="ChEBI" id="CHEBI:13193"/>
        <dbReference type="ChEBI" id="CHEBI:15377"/>
        <dbReference type="ChEBI" id="CHEBI:15379"/>
        <dbReference type="ChEBI" id="CHEBI:17499"/>
        <dbReference type="ChEBI" id="CHEBI:82657"/>
        <dbReference type="ChEBI" id="CHEBI:91175"/>
        <dbReference type="EC" id="1.14.99.29"/>
    </reaction>
</comment>
<comment type="cofactor">
    <cofactor evidence="1 2">
        <name>Fe(2+)</name>
        <dbReference type="ChEBI" id="CHEBI:29033"/>
    </cofactor>
    <text evidence="1 2">Binds 2 Fe(2+) ions per subunit.</text>
</comment>
<comment type="pathway">
    <text evidence="2 3">Protein modification; eIF5A hypusination.</text>
</comment>
<comment type="alternative products">
    <event type="alternative splicing"/>
    <isoform>
        <id>Q99LN9-1</id>
        <name>1</name>
        <sequence type="displayed"/>
    </isoform>
    <isoform>
        <id>Q99LN9-2</id>
        <name>2</name>
        <sequence type="described" ref="VSP_020315 VSP_020316"/>
    </isoform>
</comment>
<comment type="disruption phenotype">
    <text evidence="3">Embryonic lethal between E3.5 and E9.5.</text>
</comment>
<comment type="similarity">
    <text evidence="2">Belongs to the deoxyhypusine hydroxylase family.</text>
</comment>
<comment type="sequence caution" evidence="5">
    <conflict type="frameshift">
        <sequence resource="EMBL-CDS" id="BAC25064"/>
    </conflict>
</comment>
<feature type="chain" id="PRO_0000248576" description="Deoxyhypusine hydroxylase">
    <location>
        <begin position="1"/>
        <end position="302"/>
    </location>
</feature>
<feature type="repeat" description="HEAT-like PBS-type 1">
    <location>
        <begin position="54"/>
        <end position="80"/>
    </location>
</feature>
<feature type="repeat" description="HEAT-like PBS-type 2">
    <location>
        <begin position="87"/>
        <end position="113"/>
    </location>
</feature>
<feature type="repeat" description="HEAT-like PBS-type 3">
    <location>
        <begin position="175"/>
        <end position="201"/>
    </location>
</feature>
<feature type="repeat" description="HEAT-like PBS-type 4">
    <location>
        <begin position="206"/>
        <end position="232"/>
    </location>
</feature>
<feature type="repeat" description="HEAT-like PBS-type 5">
    <location>
        <begin position="239"/>
        <end position="265"/>
    </location>
</feature>
<feature type="binding site" evidence="1 2">
    <location>
        <position position="56"/>
    </location>
    <ligand>
        <name>Fe cation</name>
        <dbReference type="ChEBI" id="CHEBI:24875"/>
        <label>1</label>
    </ligand>
</feature>
<feature type="binding site" evidence="1 2">
    <location>
        <position position="89"/>
    </location>
    <ligand>
        <name>Fe cation</name>
        <dbReference type="ChEBI" id="CHEBI:24875"/>
        <label>2</label>
    </ligand>
</feature>
<feature type="binding site" evidence="1 2">
    <location>
        <position position="90"/>
    </location>
    <ligand>
        <name>Fe cation</name>
        <dbReference type="ChEBI" id="CHEBI:24875"/>
        <label>2</label>
    </ligand>
</feature>
<feature type="binding site" evidence="1 2">
    <location>
        <position position="208"/>
    </location>
    <ligand>
        <name>Fe cation</name>
        <dbReference type="ChEBI" id="CHEBI:24875"/>
        <label>2</label>
    </ligand>
</feature>
<feature type="binding site" evidence="1 2">
    <location>
        <position position="241"/>
    </location>
    <ligand>
        <name>Fe cation</name>
        <dbReference type="ChEBI" id="CHEBI:24875"/>
        <label>1</label>
    </ligand>
</feature>
<feature type="binding site" evidence="1 2">
    <location>
        <position position="242"/>
    </location>
    <ligand>
        <name>Fe cation</name>
        <dbReference type="ChEBI" id="CHEBI:24875"/>
        <label>1</label>
    </ligand>
</feature>
<feature type="modified residue" description="N-acetylmethionine" evidence="1">
    <location>
        <position position="1"/>
    </location>
</feature>
<feature type="splice variant" id="VSP_020315" description="In isoform 2." evidence="4">
    <original>LQ</original>
    <variation>SC</variation>
    <location>
        <begin position="199"/>
        <end position="200"/>
    </location>
</feature>
<feature type="splice variant" id="VSP_020316" description="In isoform 2." evidence="4">
    <location>
        <begin position="201"/>
        <end position="302"/>
    </location>
</feature>
<feature type="sequence conflict" description="In Ref. 2; AAH02295." evidence="5" ref="2">
    <original>A</original>
    <variation>V</variation>
    <location>
        <position position="68"/>
    </location>
</feature>
<feature type="sequence conflict" description="In Ref. 2; AAH02295." evidence="5" ref="2">
    <original>AD</original>
    <variation>VG</variation>
    <location>
        <begin position="75"/>
        <end position="76"/>
    </location>
</feature>
<feature type="sequence conflict" description="In Ref. 1; BAC25064." evidence="5" ref="1">
    <original>L</original>
    <variation>V</variation>
    <location>
        <position position="298"/>
    </location>
</feature>
<accession>Q99LN9</accession>
<accession>Q8BNT3</accession>
<accession>Q8BTD5</accession>
<protein>
    <recommendedName>
        <fullName evidence="2">Deoxyhypusine hydroxylase</fullName>
        <shortName evidence="2">DOHH</shortName>
        <ecNumber evidence="2 3">1.14.99.29</ecNumber>
    </recommendedName>
    <alternativeName>
        <fullName evidence="2">Deoxyhypusine dioxygenase</fullName>
    </alternativeName>
    <alternativeName>
        <fullName evidence="2">Deoxyhypusine monooxygenase</fullName>
    </alternativeName>
</protein>
<keyword id="KW-0007">Acetylation</keyword>
<keyword id="KW-0025">Alternative splicing</keyword>
<keyword id="KW-0386">Hypusine biosynthesis</keyword>
<keyword id="KW-0408">Iron</keyword>
<keyword id="KW-0479">Metal-binding</keyword>
<keyword id="KW-0503">Monooxygenase</keyword>
<keyword id="KW-0560">Oxidoreductase</keyword>
<keyword id="KW-1185">Reference proteome</keyword>
<keyword id="KW-0677">Repeat</keyword>
<name>DOHH_MOUSE</name>
<gene>
    <name evidence="6" type="primary">Dohh</name>
</gene>
<dbReference type="EC" id="1.14.99.29" evidence="2 3"/>
<dbReference type="EMBL" id="AK004052">
    <property type="protein sequence ID" value="BAC25064.1"/>
    <property type="status" value="ALT_FRAME"/>
    <property type="molecule type" value="mRNA"/>
</dbReference>
<dbReference type="EMBL" id="AK080664">
    <property type="protein sequence ID" value="BAC37972.1"/>
    <property type="molecule type" value="mRNA"/>
</dbReference>
<dbReference type="EMBL" id="BC002295">
    <property type="protein sequence ID" value="AAH02295.1"/>
    <property type="molecule type" value="mRNA"/>
</dbReference>
<dbReference type="CCDS" id="CCDS35997.1">
    <molecule id="Q99LN9-1"/>
</dbReference>
<dbReference type="RefSeq" id="NP_598725.2">
    <molecule id="Q99LN9-1"/>
    <property type="nucleotide sequence ID" value="NM_133964.3"/>
</dbReference>
<dbReference type="SMR" id="Q99LN9"/>
<dbReference type="BioGRID" id="221799">
    <property type="interactions" value="6"/>
</dbReference>
<dbReference type="FunCoup" id="Q99LN9">
    <property type="interactions" value="240"/>
</dbReference>
<dbReference type="STRING" id="10090.ENSMUSP00000072534"/>
<dbReference type="PhosphoSitePlus" id="Q99LN9"/>
<dbReference type="SwissPalm" id="Q99LN9"/>
<dbReference type="PaxDb" id="10090-ENSMUSP00000072534"/>
<dbReference type="PeptideAtlas" id="Q99LN9"/>
<dbReference type="ProteomicsDB" id="277487">
    <molecule id="Q99LN9-1"/>
</dbReference>
<dbReference type="ProteomicsDB" id="277488">
    <molecule id="Q99LN9-2"/>
</dbReference>
<dbReference type="Pumba" id="Q99LN9"/>
<dbReference type="Antibodypedia" id="23208">
    <property type="antibodies" value="42 antibodies from 16 providers"/>
</dbReference>
<dbReference type="Ensembl" id="ENSMUST00000072751.13">
    <molecule id="Q99LN9-1"/>
    <property type="protein sequence ID" value="ENSMUSP00000072534.7"/>
    <property type="gene ID" value="ENSMUSG00000078440.11"/>
</dbReference>
<dbReference type="Ensembl" id="ENSMUST00000144647.8">
    <molecule id="Q99LN9-2"/>
    <property type="protein sequence ID" value="ENSMUSP00000116074.2"/>
    <property type="gene ID" value="ENSMUSG00000113262.2"/>
</dbReference>
<dbReference type="GeneID" id="102115"/>
<dbReference type="KEGG" id="mmu:102115"/>
<dbReference type="UCSC" id="uc007ghu.2">
    <molecule id="Q99LN9-1"/>
    <property type="organism name" value="mouse"/>
</dbReference>
<dbReference type="AGR" id="MGI:1915964"/>
<dbReference type="CTD" id="83475"/>
<dbReference type="MGI" id="MGI:1915964">
    <property type="gene designation" value="Dohh"/>
</dbReference>
<dbReference type="VEuPathDB" id="HostDB:ENSMUSG00000078440"/>
<dbReference type="VEuPathDB" id="HostDB:ENSMUSG00000113262"/>
<dbReference type="eggNOG" id="KOG0567">
    <property type="taxonomic scope" value="Eukaryota"/>
</dbReference>
<dbReference type="GeneTree" id="ENSGT00500000044957"/>
<dbReference type="HOGENOM" id="CLU_053974_0_0_1"/>
<dbReference type="InParanoid" id="Q99LN9"/>
<dbReference type="OMA" id="LQEPCSI"/>
<dbReference type="OrthoDB" id="421002at2759"/>
<dbReference type="PhylomeDB" id="Q99LN9"/>
<dbReference type="TreeFam" id="TF105626"/>
<dbReference type="Reactome" id="R-MMU-204626">
    <property type="pathway name" value="Hypusine synthesis from eIF5A-lysine"/>
</dbReference>
<dbReference type="UniPathway" id="UPA00354"/>
<dbReference type="BioGRID-ORCS" id="102115">
    <property type="hits" value="25 hits in 74 CRISPR screens"/>
</dbReference>
<dbReference type="ChiTaRS" id="Dohh">
    <property type="organism name" value="mouse"/>
</dbReference>
<dbReference type="PRO" id="PR:Q99LN9"/>
<dbReference type="Proteomes" id="UP000000589">
    <property type="component" value="Chromosome 10"/>
</dbReference>
<dbReference type="RNAct" id="Q99LN9">
    <property type="molecule type" value="protein"/>
</dbReference>
<dbReference type="Bgee" id="ENSMUSG00000078440">
    <property type="expression patterns" value="Expressed in ectoplacental cone and 66 other cell types or tissues"/>
</dbReference>
<dbReference type="ExpressionAtlas" id="Q99LN9">
    <property type="expression patterns" value="baseline and differential"/>
</dbReference>
<dbReference type="GO" id="GO:0005829">
    <property type="term" value="C:cytosol"/>
    <property type="evidence" value="ECO:0000266"/>
    <property type="project" value="MGI"/>
</dbReference>
<dbReference type="GO" id="GO:0019135">
    <property type="term" value="F:deoxyhypusine monooxygenase activity"/>
    <property type="evidence" value="ECO:0000315"/>
    <property type="project" value="MGI"/>
</dbReference>
<dbReference type="GO" id="GO:0005506">
    <property type="term" value="F:iron ion binding"/>
    <property type="evidence" value="ECO:0000250"/>
    <property type="project" value="UniProtKB"/>
</dbReference>
<dbReference type="GO" id="GO:0008612">
    <property type="term" value="P:peptidyl-lysine modification to peptidyl-hypusine"/>
    <property type="evidence" value="ECO:0000250"/>
    <property type="project" value="UniProtKB"/>
</dbReference>
<dbReference type="FunFam" id="1.25.10.10:FF:000099">
    <property type="entry name" value="Deoxyhypusine hydroxylase"/>
    <property type="match status" value="2"/>
</dbReference>
<dbReference type="Gene3D" id="1.25.10.10">
    <property type="entry name" value="Leucine-rich Repeat Variant"/>
    <property type="match status" value="2"/>
</dbReference>
<dbReference type="HAMAP" id="MF_03101">
    <property type="entry name" value="Deoxyhypusine_hydroxylase"/>
    <property type="match status" value="1"/>
</dbReference>
<dbReference type="InterPro" id="IPR011989">
    <property type="entry name" value="ARM-like"/>
</dbReference>
<dbReference type="InterPro" id="IPR016024">
    <property type="entry name" value="ARM-type_fold"/>
</dbReference>
<dbReference type="InterPro" id="IPR027517">
    <property type="entry name" value="Deoxyhypusine_hydroxylase"/>
</dbReference>
<dbReference type="InterPro" id="IPR004155">
    <property type="entry name" value="PBS_lyase_HEAT"/>
</dbReference>
<dbReference type="PANTHER" id="PTHR12697:SF5">
    <property type="entry name" value="DEOXYHYPUSINE HYDROXYLASE"/>
    <property type="match status" value="1"/>
</dbReference>
<dbReference type="PANTHER" id="PTHR12697">
    <property type="entry name" value="PBS LYASE HEAT-LIKE PROTEIN"/>
    <property type="match status" value="1"/>
</dbReference>
<dbReference type="Pfam" id="PF13646">
    <property type="entry name" value="HEAT_2"/>
    <property type="match status" value="2"/>
</dbReference>
<dbReference type="SMART" id="SM00567">
    <property type="entry name" value="EZ_HEAT"/>
    <property type="match status" value="6"/>
</dbReference>
<dbReference type="SUPFAM" id="SSF48371">
    <property type="entry name" value="ARM repeat"/>
    <property type="match status" value="1"/>
</dbReference>
<organism>
    <name type="scientific">Mus musculus</name>
    <name type="common">Mouse</name>
    <dbReference type="NCBI Taxonomy" id="10090"/>
    <lineage>
        <taxon>Eukaryota</taxon>
        <taxon>Metazoa</taxon>
        <taxon>Chordata</taxon>
        <taxon>Craniata</taxon>
        <taxon>Vertebrata</taxon>
        <taxon>Euteleostomi</taxon>
        <taxon>Mammalia</taxon>
        <taxon>Eutheria</taxon>
        <taxon>Euarchontoglires</taxon>
        <taxon>Glires</taxon>
        <taxon>Rodentia</taxon>
        <taxon>Myomorpha</taxon>
        <taxon>Muroidea</taxon>
        <taxon>Muridae</taxon>
        <taxon>Murinae</taxon>
        <taxon>Mus</taxon>
        <taxon>Mus</taxon>
    </lineage>
</organism>